<dbReference type="EC" id="4.2.1.96" evidence="1"/>
<dbReference type="EMBL" id="AY596297">
    <property type="protein sequence ID" value="AAV46613.1"/>
    <property type="molecule type" value="Genomic_DNA"/>
</dbReference>
<dbReference type="RefSeq" id="WP_004957684.1">
    <property type="nucleotide sequence ID" value="NZ_CP039138.1"/>
</dbReference>
<dbReference type="SMR" id="Q5V1I9"/>
<dbReference type="STRING" id="272569.rrnAC1707"/>
<dbReference type="PaxDb" id="272569-rrnAC1707"/>
<dbReference type="EnsemblBacteria" id="AAV46613">
    <property type="protein sequence ID" value="AAV46613"/>
    <property type="gene ID" value="rrnAC1707"/>
</dbReference>
<dbReference type="KEGG" id="hma:rrnAC1707"/>
<dbReference type="PATRIC" id="fig|272569.17.peg.2391"/>
<dbReference type="eggNOG" id="arCOG02939">
    <property type="taxonomic scope" value="Archaea"/>
</dbReference>
<dbReference type="HOGENOM" id="CLU_081974_4_0_2"/>
<dbReference type="Proteomes" id="UP000001169">
    <property type="component" value="Chromosome I"/>
</dbReference>
<dbReference type="GO" id="GO:0008124">
    <property type="term" value="F:4-alpha-hydroxytetrahydrobiopterin dehydratase activity"/>
    <property type="evidence" value="ECO:0007669"/>
    <property type="project" value="UniProtKB-UniRule"/>
</dbReference>
<dbReference type="GO" id="GO:0006729">
    <property type="term" value="P:tetrahydrobiopterin biosynthetic process"/>
    <property type="evidence" value="ECO:0007669"/>
    <property type="project" value="InterPro"/>
</dbReference>
<dbReference type="CDD" id="cd00488">
    <property type="entry name" value="PCD_DCoH"/>
    <property type="match status" value="1"/>
</dbReference>
<dbReference type="Gene3D" id="3.30.1360.20">
    <property type="entry name" value="Transcriptional coactivator/pterin dehydratase"/>
    <property type="match status" value="1"/>
</dbReference>
<dbReference type="HAMAP" id="MF_00434">
    <property type="entry name" value="Pterin_4_alpha"/>
    <property type="match status" value="1"/>
</dbReference>
<dbReference type="InterPro" id="IPR036428">
    <property type="entry name" value="PCD_sf"/>
</dbReference>
<dbReference type="InterPro" id="IPR001533">
    <property type="entry name" value="Pterin_deHydtase"/>
</dbReference>
<dbReference type="NCBIfam" id="NF002017">
    <property type="entry name" value="PRK00823.1-2"/>
    <property type="match status" value="1"/>
</dbReference>
<dbReference type="PANTHER" id="PTHR12599">
    <property type="entry name" value="PTERIN-4-ALPHA-CARBINOLAMINE DEHYDRATASE"/>
    <property type="match status" value="1"/>
</dbReference>
<dbReference type="PANTHER" id="PTHR12599:SF0">
    <property type="entry name" value="PTERIN-4-ALPHA-CARBINOLAMINE DEHYDRATASE"/>
    <property type="match status" value="1"/>
</dbReference>
<dbReference type="Pfam" id="PF01329">
    <property type="entry name" value="Pterin_4a"/>
    <property type="match status" value="1"/>
</dbReference>
<dbReference type="SUPFAM" id="SSF55248">
    <property type="entry name" value="PCD-like"/>
    <property type="match status" value="1"/>
</dbReference>
<keyword id="KW-0456">Lyase</keyword>
<keyword id="KW-1185">Reference proteome</keyword>
<comment type="catalytic activity">
    <reaction evidence="1">
        <text>(4aS,6R)-4a-hydroxy-L-erythro-5,6,7,8-tetrahydrobiopterin = (6R)-L-erythro-6,7-dihydrobiopterin + H2O</text>
        <dbReference type="Rhea" id="RHEA:11920"/>
        <dbReference type="ChEBI" id="CHEBI:15377"/>
        <dbReference type="ChEBI" id="CHEBI:15642"/>
        <dbReference type="ChEBI" id="CHEBI:43120"/>
        <dbReference type="EC" id="4.2.1.96"/>
    </reaction>
</comment>
<comment type="similarity">
    <text evidence="1">Belongs to the pterin-4-alpha-carbinolamine dehydratase family.</text>
</comment>
<evidence type="ECO:0000255" key="1">
    <source>
        <dbReference type="HAMAP-Rule" id="MF_00434"/>
    </source>
</evidence>
<protein>
    <recommendedName>
        <fullName evidence="1">Putative pterin-4-alpha-carbinolamine dehydratase</fullName>
        <shortName evidence="1">PHS</shortName>
        <ecNumber evidence="1">4.2.1.96</ecNumber>
    </recommendedName>
    <alternativeName>
        <fullName evidence="1">4-alpha-hydroxy-tetrahydropterin dehydratase</fullName>
    </alternativeName>
    <alternativeName>
        <fullName evidence="1">Pterin carbinolamine dehydratase</fullName>
        <shortName evidence="1">PCD</shortName>
    </alternativeName>
</protein>
<reference key="1">
    <citation type="journal article" date="2004" name="Genome Res.">
        <title>Genome sequence of Haloarcula marismortui: a halophilic archaeon from the Dead Sea.</title>
        <authorList>
            <person name="Baliga N.S."/>
            <person name="Bonneau R."/>
            <person name="Facciotti M.T."/>
            <person name="Pan M."/>
            <person name="Glusman G."/>
            <person name="Deutsch E.W."/>
            <person name="Shannon P."/>
            <person name="Chiu Y."/>
            <person name="Weng R.S."/>
            <person name="Gan R.R."/>
            <person name="Hung P."/>
            <person name="Date S.V."/>
            <person name="Marcotte E."/>
            <person name="Hood L."/>
            <person name="Ng W.V."/>
        </authorList>
    </citation>
    <scope>NUCLEOTIDE SEQUENCE [LARGE SCALE GENOMIC DNA]</scope>
    <source>
        <strain>ATCC 43049 / DSM 3752 / JCM 8966 / VKM B-1809</strain>
    </source>
</reference>
<feature type="chain" id="PRO_0000231481" description="Putative pterin-4-alpha-carbinolamine dehydratase">
    <location>
        <begin position="1"/>
        <end position="92"/>
    </location>
</feature>
<proteinExistence type="inferred from homology"/>
<organism>
    <name type="scientific">Haloarcula marismortui (strain ATCC 43049 / DSM 3752 / JCM 8966 / VKM B-1809)</name>
    <name type="common">Halobacterium marismortui</name>
    <dbReference type="NCBI Taxonomy" id="272569"/>
    <lineage>
        <taxon>Archaea</taxon>
        <taxon>Methanobacteriati</taxon>
        <taxon>Methanobacteriota</taxon>
        <taxon>Stenosarchaea group</taxon>
        <taxon>Halobacteria</taxon>
        <taxon>Halobacteriales</taxon>
        <taxon>Haloarculaceae</taxon>
        <taxon>Haloarcula</taxon>
    </lineage>
</organism>
<sequence>MADLLSDAEISDRLPEEWTREDDEIVRVFEFDGYLDASGFLSAAAGLAEDAWHHPEMTIRWGEVEVRLTTHDAGGITENDIDLAERLNGIHD</sequence>
<accession>Q5V1I9</accession>
<name>PHS_HALMA</name>
<gene>
    <name type="ordered locus">rrnAC1707</name>
</gene>